<feature type="chain" id="PRO_0000344943" description="Ribonuclease Y">
    <location>
        <begin position="1"/>
        <end position="535"/>
    </location>
</feature>
<feature type="transmembrane region" description="Helical" evidence="1">
    <location>
        <begin position="4"/>
        <end position="24"/>
    </location>
</feature>
<feature type="domain" description="KH" evidence="1">
    <location>
        <begin position="225"/>
        <end position="285"/>
    </location>
</feature>
<feature type="domain" description="HD" evidence="2">
    <location>
        <begin position="351"/>
        <end position="444"/>
    </location>
</feature>
<feature type="region of interest" description="Disordered" evidence="3">
    <location>
        <begin position="118"/>
        <end position="141"/>
    </location>
</feature>
<protein>
    <recommendedName>
        <fullName evidence="1">Ribonuclease Y</fullName>
        <shortName evidence="1">RNase Y</shortName>
        <ecNumber evidence="1">3.1.-.-</ecNumber>
    </recommendedName>
</protein>
<proteinExistence type="inferred from homology"/>
<reference key="1">
    <citation type="journal article" date="2006" name="Proc. Natl. Acad. Sci. U.S.A.">
        <title>Molecular genetic anatomy of inter- and intraserotype variation in the human bacterial pathogen group A Streptococcus.</title>
        <authorList>
            <person name="Beres S.B."/>
            <person name="Richter E.W."/>
            <person name="Nagiec M.J."/>
            <person name="Sumby P."/>
            <person name="Porcella S.F."/>
            <person name="DeLeo F.R."/>
            <person name="Musser J.M."/>
        </authorList>
    </citation>
    <scope>NUCLEOTIDE SEQUENCE [LARGE SCALE GENOMIC DNA]</scope>
    <source>
        <strain>MGAS2096</strain>
    </source>
</reference>
<gene>
    <name evidence="1" type="primary">rny</name>
    <name type="ordered locus">MGAS2096_Spy1363</name>
</gene>
<keyword id="KW-1003">Cell membrane</keyword>
<keyword id="KW-0255">Endonuclease</keyword>
<keyword id="KW-0378">Hydrolase</keyword>
<keyword id="KW-0472">Membrane</keyword>
<keyword id="KW-0540">Nuclease</keyword>
<keyword id="KW-0694">RNA-binding</keyword>
<keyword id="KW-0812">Transmembrane</keyword>
<keyword id="KW-1133">Transmembrane helix</keyword>
<comment type="function">
    <text evidence="1">Endoribonuclease that initiates mRNA decay.</text>
</comment>
<comment type="subcellular location">
    <subcellularLocation>
        <location evidence="1">Cell membrane</location>
        <topology evidence="1">Single-pass membrane protein</topology>
    </subcellularLocation>
</comment>
<comment type="similarity">
    <text evidence="1">Belongs to the RNase Y family.</text>
</comment>
<evidence type="ECO:0000255" key="1">
    <source>
        <dbReference type="HAMAP-Rule" id="MF_00335"/>
    </source>
</evidence>
<evidence type="ECO:0000255" key="2">
    <source>
        <dbReference type="PROSITE-ProRule" id="PRU01175"/>
    </source>
</evidence>
<evidence type="ECO:0000256" key="3">
    <source>
        <dbReference type="SAM" id="MobiDB-lite"/>
    </source>
</evidence>
<organism>
    <name type="scientific">Streptococcus pyogenes serotype M12 (strain MGAS2096)</name>
    <dbReference type="NCBI Taxonomy" id="370553"/>
    <lineage>
        <taxon>Bacteria</taxon>
        <taxon>Bacillati</taxon>
        <taxon>Bacillota</taxon>
        <taxon>Bacilli</taxon>
        <taxon>Lactobacillales</taxon>
        <taxon>Streptococcaceae</taxon>
        <taxon>Streptococcus</taxon>
    </lineage>
</organism>
<dbReference type="EC" id="3.1.-.-" evidence="1"/>
<dbReference type="EMBL" id="CP000261">
    <property type="protein sequence ID" value="ABF36415.1"/>
    <property type="molecule type" value="Genomic_DNA"/>
</dbReference>
<dbReference type="SMR" id="Q1JAJ3"/>
<dbReference type="KEGG" id="spj:MGAS2096_Spy1363"/>
<dbReference type="HOGENOM" id="CLU_028328_1_0_9"/>
<dbReference type="GO" id="GO:0005886">
    <property type="term" value="C:plasma membrane"/>
    <property type="evidence" value="ECO:0007669"/>
    <property type="project" value="UniProtKB-SubCell"/>
</dbReference>
<dbReference type="GO" id="GO:0003723">
    <property type="term" value="F:RNA binding"/>
    <property type="evidence" value="ECO:0007669"/>
    <property type="project" value="UniProtKB-UniRule"/>
</dbReference>
<dbReference type="GO" id="GO:0004521">
    <property type="term" value="F:RNA endonuclease activity"/>
    <property type="evidence" value="ECO:0007669"/>
    <property type="project" value="UniProtKB-UniRule"/>
</dbReference>
<dbReference type="GO" id="GO:0006402">
    <property type="term" value="P:mRNA catabolic process"/>
    <property type="evidence" value="ECO:0007669"/>
    <property type="project" value="UniProtKB-UniRule"/>
</dbReference>
<dbReference type="CDD" id="cd00077">
    <property type="entry name" value="HDc"/>
    <property type="match status" value="1"/>
</dbReference>
<dbReference type="CDD" id="cd22431">
    <property type="entry name" value="KH-I_RNaseY"/>
    <property type="match status" value="1"/>
</dbReference>
<dbReference type="FunFam" id="1.10.3210.10:FF:000003">
    <property type="entry name" value="Ribonuclease Y"/>
    <property type="match status" value="1"/>
</dbReference>
<dbReference type="Gene3D" id="1.10.3210.10">
    <property type="entry name" value="Hypothetical protein af1432"/>
    <property type="match status" value="1"/>
</dbReference>
<dbReference type="Gene3D" id="3.30.1370.10">
    <property type="entry name" value="K Homology domain, type 1"/>
    <property type="match status" value="1"/>
</dbReference>
<dbReference type="HAMAP" id="MF_00335">
    <property type="entry name" value="RNase_Y"/>
    <property type="match status" value="1"/>
</dbReference>
<dbReference type="InterPro" id="IPR003607">
    <property type="entry name" value="HD/PDEase_dom"/>
</dbReference>
<dbReference type="InterPro" id="IPR006674">
    <property type="entry name" value="HD_domain"/>
</dbReference>
<dbReference type="InterPro" id="IPR006675">
    <property type="entry name" value="HDIG_dom"/>
</dbReference>
<dbReference type="InterPro" id="IPR004087">
    <property type="entry name" value="KH_dom"/>
</dbReference>
<dbReference type="InterPro" id="IPR004088">
    <property type="entry name" value="KH_dom_type_1"/>
</dbReference>
<dbReference type="InterPro" id="IPR036612">
    <property type="entry name" value="KH_dom_type_1_sf"/>
</dbReference>
<dbReference type="InterPro" id="IPR017705">
    <property type="entry name" value="Ribonuclease_Y"/>
</dbReference>
<dbReference type="InterPro" id="IPR022711">
    <property type="entry name" value="RNase_Y_N"/>
</dbReference>
<dbReference type="NCBIfam" id="TIGR00277">
    <property type="entry name" value="HDIG"/>
    <property type="match status" value="1"/>
</dbReference>
<dbReference type="NCBIfam" id="NF000997">
    <property type="entry name" value="PRK00106.1"/>
    <property type="match status" value="1"/>
</dbReference>
<dbReference type="NCBIfam" id="TIGR03319">
    <property type="entry name" value="RNase_Y"/>
    <property type="match status" value="1"/>
</dbReference>
<dbReference type="PANTHER" id="PTHR12826">
    <property type="entry name" value="RIBONUCLEASE Y"/>
    <property type="match status" value="1"/>
</dbReference>
<dbReference type="PANTHER" id="PTHR12826:SF15">
    <property type="entry name" value="RIBONUCLEASE Y"/>
    <property type="match status" value="1"/>
</dbReference>
<dbReference type="Pfam" id="PF01966">
    <property type="entry name" value="HD"/>
    <property type="match status" value="1"/>
</dbReference>
<dbReference type="Pfam" id="PF00013">
    <property type="entry name" value="KH_1"/>
    <property type="match status" value="1"/>
</dbReference>
<dbReference type="Pfam" id="PF12072">
    <property type="entry name" value="RNase_Y_N"/>
    <property type="match status" value="1"/>
</dbReference>
<dbReference type="SMART" id="SM00471">
    <property type="entry name" value="HDc"/>
    <property type="match status" value="1"/>
</dbReference>
<dbReference type="SMART" id="SM00322">
    <property type="entry name" value="KH"/>
    <property type="match status" value="1"/>
</dbReference>
<dbReference type="SUPFAM" id="SSF54791">
    <property type="entry name" value="Eukaryotic type KH-domain (KH-domain type I)"/>
    <property type="match status" value="1"/>
</dbReference>
<dbReference type="SUPFAM" id="SSF109604">
    <property type="entry name" value="HD-domain/PDEase-like"/>
    <property type="match status" value="1"/>
</dbReference>
<dbReference type="PROSITE" id="PS51831">
    <property type="entry name" value="HD"/>
    <property type="match status" value="1"/>
</dbReference>
<dbReference type="PROSITE" id="PS50084">
    <property type="entry name" value="KH_TYPE_1"/>
    <property type="match status" value="1"/>
</dbReference>
<name>RNY_STRPB</name>
<accession>Q1JAJ3</accession>
<sequence length="535" mass="60381">MVNIILLIVSALIGLILGYALISIRLKSAKEAAELTLLNAEQEAVDIRGKAEVDAEHIKKTAKRESKANRKELLLEAKEEARKYREEIEQEFKSERQELKQLETRLAERSLTLDRKDENLSSKEKVLDSKEQSLTDKSKHIDERQLQVEKLEEEKKAELEKVAAMTIAEAREVILMETENKLTHEIATRIRDAERDIKDRTVKTAKDLLAQAMQRLAGEYVTEQTITSVHLPDDNMKGRIIGREGRNIRTLESLTGIDVIIDDTPEVVILSGFDPIRREIARMTLESLIADGRIHPARIEELVEKNRLEMDNRIREYGEAAAYEIGAPNLHPDLIKIMGRLQFRTSFGQNVLRHSVEVGKLAGILAGELGENVALARRAGFLHDMGKAIDREVEGSHVEIGMEFARKYKEHPVVVNTIASHHGDVEPDSVIAVLVAAADALSSARPGARNESMENYIKRLRDLEEIATSFDGVQNSFALQAGREIRIMVQPEKISDDQVVILSHKVREKIENNLDYPGNIKVTVIREMRAVDYAK</sequence>